<reference key="1">
    <citation type="journal article" date="2004" name="Proc. Natl. Acad. Sci. U.S.A.">
        <title>Insights into the evolution of Yersinia pestis through whole-genome comparison with Yersinia pseudotuberculosis.</title>
        <authorList>
            <person name="Chain P.S.G."/>
            <person name="Carniel E."/>
            <person name="Larimer F.W."/>
            <person name="Lamerdin J."/>
            <person name="Stoutland P.O."/>
            <person name="Regala W.M."/>
            <person name="Georgescu A.M."/>
            <person name="Vergez L.M."/>
            <person name="Land M.L."/>
            <person name="Motin V.L."/>
            <person name="Brubaker R.R."/>
            <person name="Fowler J."/>
            <person name="Hinnebusch J."/>
            <person name="Marceau M."/>
            <person name="Medigue C."/>
            <person name="Simonet M."/>
            <person name="Chenal-Francisque V."/>
            <person name="Souza B."/>
            <person name="Dacheux D."/>
            <person name="Elliott J.M."/>
            <person name="Derbise A."/>
            <person name="Hauser L.J."/>
            <person name="Garcia E."/>
        </authorList>
    </citation>
    <scope>NUCLEOTIDE SEQUENCE [LARGE SCALE GENOMIC DNA]</scope>
    <source>
        <strain>IP32953</strain>
    </source>
</reference>
<name>BAMA_YERPS</name>
<keyword id="KW-0998">Cell outer membrane</keyword>
<keyword id="KW-0472">Membrane</keyword>
<keyword id="KW-0677">Repeat</keyword>
<keyword id="KW-0732">Signal</keyword>
<keyword id="KW-0812">Transmembrane</keyword>
<keyword id="KW-1134">Transmembrane beta strand</keyword>
<proteinExistence type="inferred from homology"/>
<dbReference type="EMBL" id="BX936398">
    <property type="protein sequence ID" value="CAH22233.1"/>
    <property type="molecule type" value="Genomic_DNA"/>
</dbReference>
<dbReference type="RefSeq" id="WP_002212139.1">
    <property type="nucleotide sequence ID" value="NZ_CP009712.1"/>
</dbReference>
<dbReference type="SMR" id="Q667J7"/>
<dbReference type="GeneID" id="57977509"/>
<dbReference type="KEGG" id="ypo:BZ17_3626"/>
<dbReference type="KEGG" id="yps:YPTB2995"/>
<dbReference type="PATRIC" id="fig|273123.14.peg.3807"/>
<dbReference type="Proteomes" id="UP000001011">
    <property type="component" value="Chromosome"/>
</dbReference>
<dbReference type="GO" id="GO:1990063">
    <property type="term" value="C:Bam protein complex"/>
    <property type="evidence" value="ECO:0007669"/>
    <property type="project" value="TreeGrafter"/>
</dbReference>
<dbReference type="GO" id="GO:0043165">
    <property type="term" value="P:Gram-negative-bacterium-type cell outer membrane assembly"/>
    <property type="evidence" value="ECO:0007669"/>
    <property type="project" value="UniProtKB-UniRule"/>
</dbReference>
<dbReference type="GO" id="GO:0051205">
    <property type="term" value="P:protein insertion into membrane"/>
    <property type="evidence" value="ECO:0007669"/>
    <property type="project" value="UniProtKB-UniRule"/>
</dbReference>
<dbReference type="FunFam" id="2.40.160.50:FF:000001">
    <property type="entry name" value="Outer membrane protein assembly factor BamA"/>
    <property type="match status" value="1"/>
</dbReference>
<dbReference type="FunFam" id="3.10.20.310:FF:000001">
    <property type="entry name" value="Outer membrane protein assembly factor BamA"/>
    <property type="match status" value="1"/>
</dbReference>
<dbReference type="FunFam" id="3.10.20.310:FF:000002">
    <property type="entry name" value="Outer membrane protein assembly factor BamA"/>
    <property type="match status" value="1"/>
</dbReference>
<dbReference type="FunFam" id="3.10.20.310:FF:000003">
    <property type="entry name" value="Outer membrane protein assembly factor BamA"/>
    <property type="match status" value="1"/>
</dbReference>
<dbReference type="FunFam" id="3.10.20.310:FF:000004">
    <property type="entry name" value="Outer membrane protein assembly factor BamA"/>
    <property type="match status" value="1"/>
</dbReference>
<dbReference type="FunFam" id="3.10.20.310:FF:000005">
    <property type="entry name" value="Outer membrane protein assembly factor BamA"/>
    <property type="match status" value="1"/>
</dbReference>
<dbReference type="Gene3D" id="3.10.20.310">
    <property type="entry name" value="membrane protein fhac"/>
    <property type="match status" value="5"/>
</dbReference>
<dbReference type="Gene3D" id="2.40.160.50">
    <property type="entry name" value="membrane protein fhac: a member of the omp85/tpsb transporter family"/>
    <property type="match status" value="1"/>
</dbReference>
<dbReference type="HAMAP" id="MF_01430">
    <property type="entry name" value="OM_assembly_BamA"/>
    <property type="match status" value="1"/>
</dbReference>
<dbReference type="InterPro" id="IPR000184">
    <property type="entry name" value="Bac_surfAg_D15"/>
</dbReference>
<dbReference type="InterPro" id="IPR010827">
    <property type="entry name" value="BamA/TamA_POTRA"/>
</dbReference>
<dbReference type="InterPro" id="IPR039910">
    <property type="entry name" value="D15-like"/>
</dbReference>
<dbReference type="InterPro" id="IPR023707">
    <property type="entry name" value="OM_assembly_BamA"/>
</dbReference>
<dbReference type="InterPro" id="IPR034746">
    <property type="entry name" value="POTRA"/>
</dbReference>
<dbReference type="NCBIfam" id="TIGR03303">
    <property type="entry name" value="OM_YaeT"/>
    <property type="match status" value="1"/>
</dbReference>
<dbReference type="NCBIfam" id="NF008287">
    <property type="entry name" value="PRK11067.1"/>
    <property type="match status" value="1"/>
</dbReference>
<dbReference type="PANTHER" id="PTHR12815:SF23">
    <property type="entry name" value="OUTER MEMBRANE PROTEIN ASSEMBLY FACTOR BAMA"/>
    <property type="match status" value="1"/>
</dbReference>
<dbReference type="PANTHER" id="PTHR12815">
    <property type="entry name" value="SORTING AND ASSEMBLY MACHINERY SAMM50 PROTEIN FAMILY MEMBER"/>
    <property type="match status" value="1"/>
</dbReference>
<dbReference type="Pfam" id="PF01103">
    <property type="entry name" value="Omp85"/>
    <property type="match status" value="1"/>
</dbReference>
<dbReference type="Pfam" id="PF07244">
    <property type="entry name" value="POTRA"/>
    <property type="match status" value="4"/>
</dbReference>
<dbReference type="PIRSF" id="PIRSF006076">
    <property type="entry name" value="OM_assembly_OMP85"/>
    <property type="match status" value="1"/>
</dbReference>
<dbReference type="PROSITE" id="PS51779">
    <property type="entry name" value="POTRA"/>
    <property type="match status" value="5"/>
</dbReference>
<protein>
    <recommendedName>
        <fullName evidence="1">Outer membrane protein assembly factor BamA</fullName>
    </recommendedName>
</protein>
<accession>Q667J7</accession>
<evidence type="ECO:0000255" key="1">
    <source>
        <dbReference type="HAMAP-Rule" id="MF_01430"/>
    </source>
</evidence>
<evidence type="ECO:0000255" key="2">
    <source>
        <dbReference type="PROSITE-ProRule" id="PRU01115"/>
    </source>
</evidence>
<gene>
    <name evidence="1" type="primary">bamA</name>
    <name type="synonym">yaeT</name>
    <name type="ordered locus">YPTB2995</name>
</gene>
<organism>
    <name type="scientific">Yersinia pseudotuberculosis serotype I (strain IP32953)</name>
    <dbReference type="NCBI Taxonomy" id="273123"/>
    <lineage>
        <taxon>Bacteria</taxon>
        <taxon>Pseudomonadati</taxon>
        <taxon>Pseudomonadota</taxon>
        <taxon>Gammaproteobacteria</taxon>
        <taxon>Enterobacterales</taxon>
        <taxon>Yersiniaceae</taxon>
        <taxon>Yersinia</taxon>
    </lineage>
</organism>
<comment type="function">
    <text evidence="1">Part of the outer membrane protein assembly complex, which is involved in assembly and insertion of beta-barrel proteins into the outer membrane. Constitutes, with BamD, the core component of the assembly machinery.</text>
</comment>
<comment type="subunit">
    <text evidence="1">Part of the Bam complex, which is composed of the outer membrane protein BamA, and four lipoproteins BamB, BamC, BamD and BamE.</text>
</comment>
<comment type="subcellular location">
    <subcellularLocation>
        <location evidence="1">Cell outer membrane</location>
    </subcellularLocation>
</comment>
<comment type="similarity">
    <text evidence="1">Belongs to the BamA family.</text>
</comment>
<sequence>MAMKKLLIASLLFGSATVYGADGFVVNDIHFEGLQRVAVGAALLNMPVRVGDTVSDDDIGKTIRALFATGNFEDVRVLRDGNTLIVQVKERPTIASITFSGNKAVKEDMLKQNLEASGVRVGEALDRTTISNIEKGLEDFYYSVGKYSASVKAVVTPLPRNRVDLKLVFTEGVSAKIQQINIVGNHSFTTDELISRFQLRDEVPWWNVVGDRKYQKQKLAGDLETLRSFYLDRGYARFNIDSTQVSLTPDKKGIYVTINITEGPQFKLNSVIVSGNLAGHQSEAEKLTKIEPGELFNGSKVTRMEDDIKKMLGRYGYAYPRVVTQPEINDDDKTVKLHINVDAGNRFYVRHIRFEGNDTSKDSVLRREMRQMEGAWLGNDQVEAGKERLNRLGYFETVDVETQRVPGAADLVDVTYKVKERNTGSLNFGIGYGTESGVSFQVGVQQDNWLGTGNTVGINGTKNDYQTYAEFTLMDPYFTVDGVSLGGRIFYNDFKADNADLSGYTNSSYGADGTLGFPINENNSLRVGVGYVHNDLSDMLPQVAMWRYLESVGERPGYDGREGFTTDDFTLNLGWTYNNLDRGFFPTSGVKSSVNTKITVPGSDNEFYKVTFDTSAYQPLNEDRSWVLLGRGRLGYGDGIGSKEMPFYENFYAGGSSTVRGFRSNNIGPKAAYYANGGATVTNSTDAVGGNAMAVASIELITPTPFISEKYSNSVRTSIFIDSGTVWDTNWENTAKTRAAGIPDYGKASNIRVSAGVALQWMSPLGPLVFSYAKPVKDYEGDKSEQFQFNIGKTW</sequence>
<feature type="signal peptide" evidence="1">
    <location>
        <begin position="1"/>
        <end position="20"/>
    </location>
</feature>
<feature type="chain" id="PRO_0000045380" description="Outer membrane protein assembly factor BamA">
    <location>
        <begin position="21"/>
        <end position="795"/>
    </location>
</feature>
<feature type="domain" description="POTRA 1" evidence="2">
    <location>
        <begin position="24"/>
        <end position="91"/>
    </location>
</feature>
<feature type="domain" description="POTRA 2" evidence="2">
    <location>
        <begin position="92"/>
        <end position="172"/>
    </location>
</feature>
<feature type="domain" description="POTRA 3" evidence="2">
    <location>
        <begin position="175"/>
        <end position="263"/>
    </location>
</feature>
<feature type="domain" description="POTRA 4" evidence="2">
    <location>
        <begin position="266"/>
        <end position="344"/>
    </location>
</feature>
<feature type="domain" description="POTRA 5" evidence="2">
    <location>
        <begin position="347"/>
        <end position="421"/>
    </location>
</feature>